<protein>
    <recommendedName>
        <fullName>Endothelin-2</fullName>
        <shortName>ET-2</shortName>
    </recommendedName>
    <alternativeName>
        <fullName>Preproendothelin-2</fullName>
        <shortName>PPET2</shortName>
    </alternativeName>
</protein>
<reference key="1">
    <citation type="journal article" date="2003" name="DNA Seq.">
        <title>Cloning of bovine preproendothelin-2 cDNA and organ distribution of transcripts.</title>
        <authorList>
            <person name="Uchide T."/>
            <person name="Fujimori Y."/>
            <person name="Temma K."/>
            <person name="Sasaki T."/>
            <person name="Saida K."/>
        </authorList>
    </citation>
    <scope>NUCLEOTIDE SEQUENCE [MRNA]</scope>
    <scope>TISSUE SPECIFICITY</scope>
</reference>
<feature type="signal peptide" evidence="2">
    <location>
        <begin position="1"/>
        <end position="23"/>
    </location>
</feature>
<feature type="propeptide" id="PRO_0000008081" evidence="1">
    <location>
        <begin position="24"/>
        <end position="45"/>
    </location>
</feature>
<feature type="peptide" id="PRO_0000008082" description="Endothelin-2">
    <location>
        <begin position="48"/>
        <end position="68"/>
    </location>
</feature>
<feature type="propeptide" id="PRO_0000008083" evidence="1">
    <location>
        <begin position="69"/>
        <end position="177"/>
    </location>
</feature>
<feature type="region of interest" description="Endothelin-like">
    <location>
        <begin position="95"/>
        <end position="110"/>
    </location>
</feature>
<feature type="region of interest" description="Disordered" evidence="3">
    <location>
        <begin position="155"/>
        <end position="177"/>
    </location>
</feature>
<feature type="site" description="Cleavage; by KEL" evidence="1">
    <location>
        <begin position="68"/>
        <end position="69"/>
    </location>
</feature>
<feature type="disulfide bond" evidence="1">
    <location>
        <begin position="48"/>
        <end position="62"/>
    </location>
</feature>
<feature type="disulfide bond" evidence="1">
    <location>
        <begin position="50"/>
        <end position="58"/>
    </location>
</feature>
<proteinExistence type="evidence at transcript level"/>
<evidence type="ECO:0000250" key="1"/>
<evidence type="ECO:0000255" key="2"/>
<evidence type="ECO:0000256" key="3">
    <source>
        <dbReference type="SAM" id="MobiDB-lite"/>
    </source>
</evidence>
<evidence type="ECO:0000269" key="4">
    <source>
    </source>
</evidence>
<evidence type="ECO:0000305" key="5"/>
<organism>
    <name type="scientific">Bos taurus</name>
    <name type="common">Bovine</name>
    <dbReference type="NCBI Taxonomy" id="9913"/>
    <lineage>
        <taxon>Eukaryota</taxon>
        <taxon>Metazoa</taxon>
        <taxon>Chordata</taxon>
        <taxon>Craniata</taxon>
        <taxon>Vertebrata</taxon>
        <taxon>Euteleostomi</taxon>
        <taxon>Mammalia</taxon>
        <taxon>Eutheria</taxon>
        <taxon>Laurasiatheria</taxon>
        <taxon>Artiodactyla</taxon>
        <taxon>Ruminantia</taxon>
        <taxon>Pecora</taxon>
        <taxon>Bovidae</taxon>
        <taxon>Bovinae</taxon>
        <taxon>Bos</taxon>
    </lineage>
</organism>
<name>EDN2_BOVIN</name>
<keyword id="KW-0165">Cleavage on pair of basic residues</keyword>
<keyword id="KW-1015">Disulfide bond</keyword>
<keyword id="KW-1185">Reference proteome</keyword>
<keyword id="KW-0964">Secreted</keyword>
<keyword id="KW-0732">Signal</keyword>
<keyword id="KW-0838">Vasoactive</keyword>
<keyword id="KW-0839">Vasoconstrictor</keyword>
<gene>
    <name type="primary">EDN2</name>
</gene>
<comment type="function">
    <text>Endothelins are endothelium-derived vasoconstrictor peptides.</text>
</comment>
<comment type="subcellular location">
    <subcellularLocation>
        <location>Secreted</location>
    </subcellularLocation>
</comment>
<comment type="tissue specificity">
    <text evidence="4">Expressed in various organs including heart, lung, liver, kidney, gastrointestinal tract, uterus and ovary, but not in spleen. Within the gastrointestinal tract, gene expression was detected in rumen, a ruminant-specific digestive organ, as well as stomach, duodenum and colon.</text>
</comment>
<comment type="similarity">
    <text evidence="5">Belongs to the endothelin/sarafotoxin family.</text>
</comment>
<sequence>MPTALCSIALALLVALHEGKSQAATTPIPEQPAPLPRARGSHLRTRRCSCSSWLDKECVYFCHLDIIWVNTPGQTAPYGLGNPPRRRRRSLPRRCECYSARDPACATFCHQRPWTDAVAVPGSGSPAAAFQDGKTQATAGELLQRLRVISATKIHFARQQQKPTRETRPTHSRQRKR</sequence>
<accession>Q867A9</accession>
<dbReference type="EMBL" id="AB100737">
    <property type="protein sequence ID" value="BAC55924.1"/>
    <property type="molecule type" value="mRNA"/>
</dbReference>
<dbReference type="RefSeq" id="NP_783645.1">
    <property type="nucleotide sequence ID" value="NM_175714.2"/>
</dbReference>
<dbReference type="FunCoup" id="Q867A9">
    <property type="interactions" value="21"/>
</dbReference>
<dbReference type="STRING" id="9913.ENSBTAP00000028571"/>
<dbReference type="PaxDb" id="9913-ENSBTAP00000028571"/>
<dbReference type="GeneID" id="319094"/>
<dbReference type="KEGG" id="bta:319094"/>
<dbReference type="CTD" id="1907"/>
<dbReference type="VEuPathDB" id="HostDB:ENSBTAG00000021434"/>
<dbReference type="eggNOG" id="ENOG502S5KM">
    <property type="taxonomic scope" value="Eukaryota"/>
</dbReference>
<dbReference type="HOGENOM" id="CLU_090013_2_1_1"/>
<dbReference type="InParanoid" id="Q867A9"/>
<dbReference type="OMA" id="PTAWCSV"/>
<dbReference type="OrthoDB" id="9362154at2759"/>
<dbReference type="TreeFam" id="TF333184"/>
<dbReference type="Reactome" id="R-BTA-375276">
    <property type="pathway name" value="Peptide ligand-binding receptors"/>
</dbReference>
<dbReference type="Reactome" id="R-BTA-416476">
    <property type="pathway name" value="G alpha (q) signalling events"/>
</dbReference>
<dbReference type="Proteomes" id="UP000009136">
    <property type="component" value="Chromosome 3"/>
</dbReference>
<dbReference type="Bgee" id="ENSBTAG00000021434">
    <property type="expression patterns" value="Expressed in anterior segment of eyeball and 46 other cell types or tissues"/>
</dbReference>
<dbReference type="GO" id="GO:0005615">
    <property type="term" value="C:extracellular space"/>
    <property type="evidence" value="ECO:0000318"/>
    <property type="project" value="GO_Central"/>
</dbReference>
<dbReference type="GO" id="GO:0031708">
    <property type="term" value="F:endothelin B receptor binding"/>
    <property type="evidence" value="ECO:0000318"/>
    <property type="project" value="GO_Central"/>
</dbReference>
<dbReference type="GO" id="GO:0005179">
    <property type="term" value="F:hormone activity"/>
    <property type="evidence" value="ECO:0000318"/>
    <property type="project" value="GO_Central"/>
</dbReference>
<dbReference type="GO" id="GO:0006874">
    <property type="term" value="P:intracellular calcium ion homeostasis"/>
    <property type="evidence" value="ECO:0000318"/>
    <property type="project" value="GO_Central"/>
</dbReference>
<dbReference type="GO" id="GO:0045987">
    <property type="term" value="P:positive regulation of smooth muscle contraction"/>
    <property type="evidence" value="ECO:0000318"/>
    <property type="project" value="GO_Central"/>
</dbReference>
<dbReference type="GO" id="GO:0003100">
    <property type="term" value="P:regulation of systemic arterial blood pressure by endothelin"/>
    <property type="evidence" value="ECO:0000318"/>
    <property type="project" value="GO_Central"/>
</dbReference>
<dbReference type="GO" id="GO:0019229">
    <property type="term" value="P:regulation of vasoconstriction"/>
    <property type="evidence" value="ECO:0007669"/>
    <property type="project" value="InterPro"/>
</dbReference>
<dbReference type="GO" id="GO:0014826">
    <property type="term" value="P:vein smooth muscle contraction"/>
    <property type="evidence" value="ECO:0000318"/>
    <property type="project" value="GO_Central"/>
</dbReference>
<dbReference type="InterPro" id="IPR020475">
    <property type="entry name" value="Endothelin"/>
</dbReference>
<dbReference type="InterPro" id="IPR019764">
    <property type="entry name" value="Endothelin_toxin_CS"/>
</dbReference>
<dbReference type="InterPro" id="IPR001928">
    <property type="entry name" value="Endothln-like_toxin"/>
</dbReference>
<dbReference type="PANTHER" id="PTHR13874">
    <property type="entry name" value="ENDOTHELIN"/>
    <property type="match status" value="1"/>
</dbReference>
<dbReference type="PANTHER" id="PTHR13874:SF9">
    <property type="entry name" value="ENDOTHELIN-2"/>
    <property type="match status" value="1"/>
</dbReference>
<dbReference type="Pfam" id="PF00322">
    <property type="entry name" value="Endothelin"/>
    <property type="match status" value="1"/>
</dbReference>
<dbReference type="PRINTS" id="PR00365">
    <property type="entry name" value="ENDOTHELIN"/>
</dbReference>
<dbReference type="SMART" id="SM00272">
    <property type="entry name" value="END"/>
    <property type="match status" value="2"/>
</dbReference>
<dbReference type="PROSITE" id="PS00270">
    <property type="entry name" value="ENDOTHELIN"/>
    <property type="match status" value="2"/>
</dbReference>